<sequence length="1038" mass="118871">MERIVSRVRRLSPLHTFSDALLISLLSESDFQPDSIQQGVVLFEKDEPTEYWYLLLSGEVQLYSKTYTGDFNHLKTLRCGALFGDLSTLTHSCSCLVTRPAQLIRIAQNHFLSVYNKHGDHLQPFIIIMHDILTDETPSDPIHPHSSGLFNGQRSMDLISTEINPSEIVSVSTNGMLSKMILPSIPNQREKPMNRVVVNQQKNEERNFIEFHNPTGIEKQIRDSGGILHRKMLTDNHQVIRDITTEHTRVQNCMIGAEMIDWLLTLFVSTSTTCSSLSRIQMSAIWQVLLNNGLISHIDGEHQFLDKTNSYYRWVQQFRSRNKVAPSIEEVSKSITLLSSVAPETLFLMIVSKPGFERSPEELEVVYEELTFIKALSHLSTMVKRQLSNFVKVEQYVHAGSVVFRQGEIGVYWYIVLKGAVEVNVNGKIVCLLREGDDFGKLALVNDLPRAATIVTYEDDSMFLVVDKHHFNQILHQVEANTVRLKDYGEDVLVLEKVDIPRGAALENSNSCNFNCGYSVMAGKAEKILEYVLETRIDALGDDISELDVFVEDFILTHDAFMPDNTVCNFLKSYYFRTPYRATRDSITDSCTEEVRCKRRVVQFVYVWCSLLRVNFFLNPVTNSFVEELFCHVIDDRKRLGGMEDILTRIGSIRSTRENMQLVLARHPAIVLDCGVLSAHTPCPVLPSDVCNQIIYLADTTCFVLPIRVDKTAEEICELSRRRMSFSAEPLNLVEVKSNGEKLIFSPNDRAIPTVLSLNSKLYVVNREEIPLLVPMEDQNGPTPSSHSSILHLIDSQELAHQLFLFHLQLLRSTDSNELLYQVIGRESFPLSMPFNLDLLVRRFNEVQHWSTTEILLATEENRMEILKKFISIATIAREYRDLLTVFAITLGLSHTSISRLTLTWSKLPPASLKTFSELENLLDPTRNHRMYRLLVSKMSSPYIPFVPLILKDLMFIHQGNKSFYNGLVNFEKMHMFAKIFRSFRQCKSQMDNGAEHEFIEPQSLIRNLRVIDNQKKLMQLSYEIEPKSAPKRNVIFH</sequence>
<keyword id="KW-0344">Guanine-nucleotide releasing factor</keyword>
<keyword id="KW-1185">Reference proteome</keyword>
<keyword id="KW-0677">Repeat</keyword>
<feature type="chain" id="PRO_0000068900" description="Rap guanine nucleotide exchange factor 1">
    <location>
        <begin position="1"/>
        <end position="1038"/>
    </location>
</feature>
<feature type="domain" description="DEP" evidence="2">
    <location>
        <begin position="234"/>
        <end position="316"/>
    </location>
</feature>
<feature type="domain" description="N-terminal Ras-GEF" evidence="3">
    <location>
        <begin position="516"/>
        <end position="654"/>
    </location>
</feature>
<feature type="domain" description="Ras-GEF" evidence="4">
    <location>
        <begin position="795"/>
        <end position="1028"/>
    </location>
</feature>
<feature type="binding site">
    <location>
        <begin position="10"/>
        <end position="140"/>
    </location>
    <ligand>
        <name>a nucleoside 3',5'-cyclic phosphate</name>
        <dbReference type="ChEBI" id="CHEBI:58464"/>
        <label>1</label>
    </ligand>
</feature>
<feature type="binding site">
    <location>
        <begin position="375"/>
        <end position="492"/>
    </location>
    <ligand>
        <name>a nucleoside 3',5'-cyclic phosphate</name>
        <dbReference type="ChEBI" id="CHEBI:58464"/>
        <label>2</label>
    </ligand>
</feature>
<accession>P34578</accession>
<comment type="function">
    <text evidence="1 5">Guanine nucleotide-releasing protein (By similarity). Together with GTPase drn-1, may regulate acetylcholine release at the neuromuscular junctions probably downstream of G-protein gsa-1 and adenylate cyclase acy-1 (PubMed:22897658).</text>
</comment>
<comment type="subunit">
    <text evidence="5">Interacts (via C-terminus) with drn-1.</text>
</comment>
<comment type="tissue specificity">
    <text evidence="5">Expressed specifically in neurons including the nerve ring, ventral and dorsal nerve cord motor neurons and tail ganglia.</text>
</comment>
<gene>
    <name type="primary">epac-1</name>
    <name type="ORF">T20G5.5</name>
</gene>
<organism>
    <name type="scientific">Caenorhabditis elegans</name>
    <dbReference type="NCBI Taxonomy" id="6239"/>
    <lineage>
        <taxon>Eukaryota</taxon>
        <taxon>Metazoa</taxon>
        <taxon>Ecdysozoa</taxon>
        <taxon>Nematoda</taxon>
        <taxon>Chromadorea</taxon>
        <taxon>Rhabditida</taxon>
        <taxon>Rhabditina</taxon>
        <taxon>Rhabditomorpha</taxon>
        <taxon>Rhabditoidea</taxon>
        <taxon>Rhabditidae</taxon>
        <taxon>Peloderinae</taxon>
        <taxon>Caenorhabditis</taxon>
    </lineage>
</organism>
<proteinExistence type="evidence at protein level"/>
<dbReference type="EMBL" id="Z30423">
    <property type="protein sequence ID" value="CAA83013.3"/>
    <property type="molecule type" value="Genomic_DNA"/>
</dbReference>
<dbReference type="PIR" id="S42368">
    <property type="entry name" value="S42368"/>
</dbReference>
<dbReference type="RefSeq" id="NP_499256.2">
    <property type="nucleotide sequence ID" value="NM_066855.5"/>
</dbReference>
<dbReference type="SMR" id="P34578"/>
<dbReference type="BioGRID" id="41626">
    <property type="interactions" value="1"/>
</dbReference>
<dbReference type="FunCoup" id="P34578">
    <property type="interactions" value="881"/>
</dbReference>
<dbReference type="STRING" id="6239.T20G5.5.1"/>
<dbReference type="PaxDb" id="6239-T20G5.5"/>
<dbReference type="EnsemblMetazoa" id="T20G5.5.1">
    <property type="protein sequence ID" value="T20G5.5.1"/>
    <property type="gene ID" value="WBGene00004255"/>
</dbReference>
<dbReference type="GeneID" id="176432"/>
<dbReference type="KEGG" id="cel:CELE_T20G5.5"/>
<dbReference type="AGR" id="WB:WBGene00004255"/>
<dbReference type="CTD" id="176432"/>
<dbReference type="WormBase" id="T20G5.5">
    <property type="protein sequence ID" value="CE43630"/>
    <property type="gene ID" value="WBGene00004255"/>
    <property type="gene designation" value="epac-1"/>
</dbReference>
<dbReference type="eggNOG" id="KOG2378">
    <property type="taxonomic scope" value="Eukaryota"/>
</dbReference>
<dbReference type="GeneTree" id="ENSGT00940000172554"/>
<dbReference type="HOGENOM" id="CLU_006829_1_0_1"/>
<dbReference type="InParanoid" id="P34578"/>
<dbReference type="OMA" id="WEKHRQS"/>
<dbReference type="OrthoDB" id="21144at2759"/>
<dbReference type="PhylomeDB" id="P34578"/>
<dbReference type="Reactome" id="R-CEL-354192">
    <property type="pathway name" value="Integrin signaling"/>
</dbReference>
<dbReference type="Reactome" id="R-CEL-381676">
    <property type="pathway name" value="Glucagon-like Peptide-1 (GLP1) regulates insulin secretion"/>
</dbReference>
<dbReference type="Reactome" id="R-CEL-392517">
    <property type="pathway name" value="Rap1 signalling"/>
</dbReference>
<dbReference type="PRO" id="PR:P34578"/>
<dbReference type="Proteomes" id="UP000001940">
    <property type="component" value="Chromosome III"/>
</dbReference>
<dbReference type="Bgee" id="WBGene00004255">
    <property type="expression patterns" value="Expressed in pharyngeal muscle cell (C elegans) and 2 other cell types or tissues"/>
</dbReference>
<dbReference type="GO" id="GO:0005886">
    <property type="term" value="C:plasma membrane"/>
    <property type="evidence" value="ECO:0000318"/>
    <property type="project" value="GO_Central"/>
</dbReference>
<dbReference type="GO" id="GO:0005085">
    <property type="term" value="F:guanyl-nucleotide exchange factor activity"/>
    <property type="evidence" value="ECO:0000318"/>
    <property type="project" value="GO_Central"/>
</dbReference>
<dbReference type="GO" id="GO:0007265">
    <property type="term" value="P:Ras protein signal transduction"/>
    <property type="evidence" value="ECO:0000318"/>
    <property type="project" value="GO_Central"/>
</dbReference>
<dbReference type="CDD" id="cd00038">
    <property type="entry name" value="CAP_ED"/>
    <property type="match status" value="2"/>
</dbReference>
<dbReference type="CDD" id="cd04437">
    <property type="entry name" value="DEP_Epac"/>
    <property type="match status" value="1"/>
</dbReference>
<dbReference type="CDD" id="cd06224">
    <property type="entry name" value="REM"/>
    <property type="match status" value="1"/>
</dbReference>
<dbReference type="Gene3D" id="2.60.120.10">
    <property type="entry name" value="Jelly Rolls"/>
    <property type="match status" value="2"/>
</dbReference>
<dbReference type="Gene3D" id="3.10.20.90">
    <property type="entry name" value="Phosphatidylinositol 3-kinase Catalytic Subunit, Chain A, domain 1"/>
    <property type="match status" value="1"/>
</dbReference>
<dbReference type="Gene3D" id="1.10.840.10">
    <property type="entry name" value="Ras guanine-nucleotide exchange factors catalytic domain"/>
    <property type="match status" value="1"/>
</dbReference>
<dbReference type="Gene3D" id="1.20.870.10">
    <property type="entry name" value="Son of sevenless (SoS) protein Chain: S domain 1"/>
    <property type="match status" value="1"/>
</dbReference>
<dbReference type="Gene3D" id="1.10.10.10">
    <property type="entry name" value="Winged helix-like DNA-binding domain superfamily/Winged helix DNA-binding domain"/>
    <property type="match status" value="1"/>
</dbReference>
<dbReference type="InterPro" id="IPR000595">
    <property type="entry name" value="cNMP-bd_dom"/>
</dbReference>
<dbReference type="InterPro" id="IPR018490">
    <property type="entry name" value="cNMP-bd_dom_sf"/>
</dbReference>
<dbReference type="InterPro" id="IPR000591">
    <property type="entry name" value="DEP_dom"/>
</dbReference>
<dbReference type="InterPro" id="IPR008937">
    <property type="entry name" value="Ras-like_GEF"/>
</dbReference>
<dbReference type="InterPro" id="IPR000651">
    <property type="entry name" value="Ras-like_Gua-exchang_fac_N"/>
</dbReference>
<dbReference type="InterPro" id="IPR019804">
    <property type="entry name" value="Ras_G-nucl-exch_fac_CS"/>
</dbReference>
<dbReference type="InterPro" id="IPR023578">
    <property type="entry name" value="Ras_GEF_dom_sf"/>
</dbReference>
<dbReference type="InterPro" id="IPR001895">
    <property type="entry name" value="RASGEF_cat_dom"/>
</dbReference>
<dbReference type="InterPro" id="IPR036964">
    <property type="entry name" value="RASGEF_cat_dom_sf"/>
</dbReference>
<dbReference type="InterPro" id="IPR014710">
    <property type="entry name" value="RmlC-like_jellyroll"/>
</dbReference>
<dbReference type="InterPro" id="IPR029071">
    <property type="entry name" value="Ubiquitin-like_domsf"/>
</dbReference>
<dbReference type="InterPro" id="IPR036388">
    <property type="entry name" value="WH-like_DNA-bd_sf"/>
</dbReference>
<dbReference type="InterPro" id="IPR036390">
    <property type="entry name" value="WH_DNA-bd_sf"/>
</dbReference>
<dbReference type="PANTHER" id="PTHR23113:SF327">
    <property type="entry name" value="EXCHANGE PROTEIN DIRECTLY ACTIVATED BY CAMP, ISOFORM E"/>
    <property type="match status" value="1"/>
</dbReference>
<dbReference type="PANTHER" id="PTHR23113">
    <property type="entry name" value="GUANINE NUCLEOTIDE EXCHANGE FACTOR"/>
    <property type="match status" value="1"/>
</dbReference>
<dbReference type="Pfam" id="PF00027">
    <property type="entry name" value="cNMP_binding"/>
    <property type="match status" value="2"/>
</dbReference>
<dbReference type="Pfam" id="PF00610">
    <property type="entry name" value="DEP"/>
    <property type="match status" value="1"/>
</dbReference>
<dbReference type="Pfam" id="PF00617">
    <property type="entry name" value="RasGEF"/>
    <property type="match status" value="1"/>
</dbReference>
<dbReference type="Pfam" id="PF00618">
    <property type="entry name" value="RasGEF_N"/>
    <property type="match status" value="1"/>
</dbReference>
<dbReference type="PRINTS" id="PR00103">
    <property type="entry name" value="CAMPKINASE"/>
</dbReference>
<dbReference type="SMART" id="SM00100">
    <property type="entry name" value="cNMP"/>
    <property type="match status" value="2"/>
</dbReference>
<dbReference type="SMART" id="SM00049">
    <property type="entry name" value="DEP"/>
    <property type="match status" value="1"/>
</dbReference>
<dbReference type="SMART" id="SM00147">
    <property type="entry name" value="RasGEF"/>
    <property type="match status" value="1"/>
</dbReference>
<dbReference type="SMART" id="SM00229">
    <property type="entry name" value="RasGEFN"/>
    <property type="match status" value="1"/>
</dbReference>
<dbReference type="SUPFAM" id="SSF51206">
    <property type="entry name" value="cAMP-binding domain-like"/>
    <property type="match status" value="2"/>
</dbReference>
<dbReference type="SUPFAM" id="SSF48366">
    <property type="entry name" value="Ras GEF"/>
    <property type="match status" value="1"/>
</dbReference>
<dbReference type="SUPFAM" id="SSF54236">
    <property type="entry name" value="Ubiquitin-like"/>
    <property type="match status" value="1"/>
</dbReference>
<dbReference type="SUPFAM" id="SSF46785">
    <property type="entry name" value="Winged helix' DNA-binding domain"/>
    <property type="match status" value="1"/>
</dbReference>
<dbReference type="PROSITE" id="PS50042">
    <property type="entry name" value="CNMP_BINDING_3"/>
    <property type="match status" value="2"/>
</dbReference>
<dbReference type="PROSITE" id="PS50186">
    <property type="entry name" value="DEP"/>
    <property type="match status" value="1"/>
</dbReference>
<dbReference type="PROSITE" id="PS00720">
    <property type="entry name" value="RASGEF"/>
    <property type="match status" value="1"/>
</dbReference>
<dbReference type="PROSITE" id="PS50009">
    <property type="entry name" value="RASGEF_CAT"/>
    <property type="match status" value="1"/>
</dbReference>
<dbReference type="PROSITE" id="PS50212">
    <property type="entry name" value="RASGEF_NTER"/>
    <property type="match status" value="1"/>
</dbReference>
<protein>
    <recommendedName>
        <fullName>Rap guanine nucleotide exchange factor 1</fullName>
    </recommendedName>
    <alternativeName>
        <fullName>Exchange protein activated by cyclic AMP 1</fullName>
    </alternativeName>
</protein>
<reference key="1">
    <citation type="journal article" date="1998" name="Science">
        <title>Genome sequence of the nematode C. elegans: a platform for investigating biology.</title>
        <authorList>
            <consortium name="The C. elegans sequencing consortium"/>
        </authorList>
    </citation>
    <scope>NUCLEOTIDE SEQUENCE [LARGE SCALE GENOMIC DNA]</scope>
    <source>
        <strain>Bristol N2</strain>
    </source>
</reference>
<reference key="2">
    <citation type="journal article" date="2012" name="Genes Cells">
        <title>Neuronally expressed Ras-family GTPase Di-Ras modulates synaptic activity in Caenorhabditis elegans.</title>
        <authorList>
            <person name="Tada M."/>
            <person name="Gengyo-Ando K."/>
            <person name="Kobayashi T."/>
            <person name="Fukuyama M."/>
            <person name="Mitani S."/>
            <person name="Kontani K."/>
            <person name="Katada T."/>
        </authorList>
    </citation>
    <scope>FUNCTION</scope>
    <scope>INTERACTION WITH DRN-1</scope>
    <scope>TISSUE SPECIFICITY</scope>
</reference>
<name>RPGF1_CAEEL</name>
<evidence type="ECO:0000250" key="1">
    <source>
        <dbReference type="UniProtKB" id="Q13905"/>
    </source>
</evidence>
<evidence type="ECO:0000255" key="2">
    <source>
        <dbReference type="PROSITE-ProRule" id="PRU00066"/>
    </source>
</evidence>
<evidence type="ECO:0000255" key="3">
    <source>
        <dbReference type="PROSITE-ProRule" id="PRU00135"/>
    </source>
</evidence>
<evidence type="ECO:0000255" key="4">
    <source>
        <dbReference type="PROSITE-ProRule" id="PRU00168"/>
    </source>
</evidence>
<evidence type="ECO:0000269" key="5">
    <source>
    </source>
</evidence>